<name>EFNMT_DROPS</name>
<evidence type="ECO:0000250" key="1">
    <source>
        <dbReference type="UniProtKB" id="Q8N6R0"/>
    </source>
</evidence>
<evidence type="ECO:0000305" key="2"/>
<comment type="function">
    <text evidence="1">Dual methyltransferase. It catalyzes N-terminal methylation of target proteins via its C-terminus. It catalyzes dimethylation on lysine residues of target proteins via its N-terminus.</text>
</comment>
<comment type="catalytic activity">
    <reaction evidence="1">
        <text>L-lysyl-[protein] + S-adenosyl-L-methionine = N(6)-methyl-L-lysyl-[protein] + S-adenosyl-L-homocysteine + H(+)</text>
        <dbReference type="Rhea" id="RHEA:51736"/>
        <dbReference type="Rhea" id="RHEA-COMP:9752"/>
        <dbReference type="Rhea" id="RHEA-COMP:13053"/>
        <dbReference type="ChEBI" id="CHEBI:15378"/>
        <dbReference type="ChEBI" id="CHEBI:29969"/>
        <dbReference type="ChEBI" id="CHEBI:57856"/>
        <dbReference type="ChEBI" id="CHEBI:59789"/>
        <dbReference type="ChEBI" id="CHEBI:61929"/>
    </reaction>
</comment>
<comment type="catalytic activity">
    <reaction evidence="1">
        <text>N(6)-methyl-L-lysyl-[protein] + S-adenosyl-L-methionine = N(6),N(6)-dimethyl-L-lysyl-[protein] + S-adenosyl-L-homocysteine + H(+)</text>
        <dbReference type="Rhea" id="RHEA:54196"/>
        <dbReference type="Rhea" id="RHEA-COMP:13053"/>
        <dbReference type="Rhea" id="RHEA-COMP:13827"/>
        <dbReference type="ChEBI" id="CHEBI:15378"/>
        <dbReference type="ChEBI" id="CHEBI:57856"/>
        <dbReference type="ChEBI" id="CHEBI:59789"/>
        <dbReference type="ChEBI" id="CHEBI:61929"/>
        <dbReference type="ChEBI" id="CHEBI:61976"/>
    </reaction>
</comment>
<comment type="catalytic activity">
    <reaction evidence="1">
        <text>N-terminal glycyl-L-lysyl-L-glutamyl-[protein] + 3 S-adenosyl-L-methionine = N-terminal N,N,N-trimethyl-glycyl-L-lysyl-L-glutamyl-[protein] + 3 S-adenosyl-L-homocysteine + 3 H(+)</text>
        <dbReference type="Rhea" id="RHEA:58440"/>
        <dbReference type="Rhea" id="RHEA-COMP:15140"/>
        <dbReference type="Rhea" id="RHEA-COMP:15143"/>
        <dbReference type="ChEBI" id="CHEBI:15378"/>
        <dbReference type="ChEBI" id="CHEBI:57856"/>
        <dbReference type="ChEBI" id="CHEBI:59789"/>
        <dbReference type="ChEBI" id="CHEBI:142597"/>
        <dbReference type="ChEBI" id="CHEBI:142600"/>
    </reaction>
</comment>
<comment type="similarity">
    <text evidence="2">Belongs to the methyltransferase superfamily.</text>
</comment>
<keyword id="KW-0489">Methyltransferase</keyword>
<keyword id="KW-0511">Multifunctional enzyme</keyword>
<keyword id="KW-1185">Reference proteome</keyword>
<keyword id="KW-0808">Transferase</keyword>
<organism>
    <name type="scientific">Drosophila pseudoobscura pseudoobscura</name>
    <name type="common">Fruit fly</name>
    <dbReference type="NCBI Taxonomy" id="46245"/>
    <lineage>
        <taxon>Eukaryota</taxon>
        <taxon>Metazoa</taxon>
        <taxon>Ecdysozoa</taxon>
        <taxon>Arthropoda</taxon>
        <taxon>Hexapoda</taxon>
        <taxon>Insecta</taxon>
        <taxon>Pterygota</taxon>
        <taxon>Neoptera</taxon>
        <taxon>Endopterygota</taxon>
        <taxon>Diptera</taxon>
        <taxon>Brachycera</taxon>
        <taxon>Muscomorpha</taxon>
        <taxon>Ephydroidea</taxon>
        <taxon>Drosophilidae</taxon>
        <taxon>Drosophila</taxon>
        <taxon>Sophophora</taxon>
    </lineage>
</organism>
<feature type="chain" id="PRO_0000310765" description="eEF1A lysine and N-terminal methyltransferase homolog">
    <location>
        <begin position="1"/>
        <end position="673"/>
    </location>
</feature>
<gene>
    <name type="ORF">GA15401</name>
</gene>
<protein>
    <recommendedName>
        <fullName evidence="2">eEF1A lysine and N-terminal methyltransferase homolog</fullName>
    </recommendedName>
    <domain>
        <recommendedName>
            <fullName evidence="2">eEF1A lysine methyltransferase homolog</fullName>
            <ecNumber evidence="1">2.1.1.-</ecNumber>
        </recommendedName>
    </domain>
    <domain>
        <recommendedName>
            <fullName evidence="2">eEF1A N-terminal methyltransferase homolog</fullName>
            <ecNumber evidence="1">2.1.1.-</ecNumber>
        </recommendedName>
    </domain>
</protein>
<accession>Q29LW1</accession>
<dbReference type="EC" id="2.1.1.-" evidence="1"/>
<dbReference type="EMBL" id="CH379060">
    <property type="protein sequence ID" value="EAL33934.1"/>
    <property type="molecule type" value="Genomic_DNA"/>
</dbReference>
<dbReference type="RefSeq" id="XP_001356868.1">
    <property type="nucleotide sequence ID" value="XM_001356832.3"/>
</dbReference>
<dbReference type="SMR" id="Q29LW1"/>
<dbReference type="FunCoup" id="Q29LW1">
    <property type="interactions" value="2339"/>
</dbReference>
<dbReference type="STRING" id="46245.Q29LW1"/>
<dbReference type="EnsemblMetazoa" id="FBtr0281362">
    <property type="protein sequence ID" value="FBpp0279800"/>
    <property type="gene ID" value="FBgn0075420"/>
</dbReference>
<dbReference type="KEGG" id="dpo:4816930"/>
<dbReference type="eggNOG" id="KOG2352">
    <property type="taxonomic scope" value="Eukaryota"/>
</dbReference>
<dbReference type="HOGENOM" id="CLU_010025_1_0_1"/>
<dbReference type="InParanoid" id="Q29LW1"/>
<dbReference type="OMA" id="FEWYGAF"/>
<dbReference type="PhylomeDB" id="Q29LW1"/>
<dbReference type="Proteomes" id="UP000001819">
    <property type="component" value="Chromosome 4"/>
</dbReference>
<dbReference type="Bgee" id="FBgn0075420">
    <property type="expression patterns" value="Expressed in female reproductive system and 3 other cell types or tissues"/>
</dbReference>
<dbReference type="GO" id="GO:0016279">
    <property type="term" value="F:protein-lysine N-methyltransferase activity"/>
    <property type="evidence" value="ECO:0007669"/>
    <property type="project" value="RHEA"/>
</dbReference>
<dbReference type="GO" id="GO:0032259">
    <property type="term" value="P:methylation"/>
    <property type="evidence" value="ECO:0007669"/>
    <property type="project" value="UniProtKB-KW"/>
</dbReference>
<dbReference type="CDD" id="cd02440">
    <property type="entry name" value="AdoMet_MTases"/>
    <property type="match status" value="2"/>
</dbReference>
<dbReference type="FunFam" id="3.40.50.150:FF:000462">
    <property type="entry name" value="Methyltransferase-like protein 13"/>
    <property type="match status" value="1"/>
</dbReference>
<dbReference type="FunFam" id="3.40.50.150:FF:000110">
    <property type="entry name" value="methyltransferase-like protein 13 isoform X1"/>
    <property type="match status" value="1"/>
</dbReference>
<dbReference type="Gene3D" id="3.40.50.150">
    <property type="entry name" value="Vaccinia Virus protein VP39"/>
    <property type="match status" value="2"/>
</dbReference>
<dbReference type="InterPro" id="IPR051419">
    <property type="entry name" value="Lys/N-term_MeTrsfase_sf"/>
</dbReference>
<dbReference type="InterPro" id="IPR025714">
    <property type="entry name" value="Methyltranfer_dom"/>
</dbReference>
<dbReference type="InterPro" id="IPR029063">
    <property type="entry name" value="SAM-dependent_MTases_sf"/>
</dbReference>
<dbReference type="PANTHER" id="PTHR12176:SF80">
    <property type="entry name" value="EEF1A LYSINE METHYLTRANSFERASE 4"/>
    <property type="match status" value="1"/>
</dbReference>
<dbReference type="PANTHER" id="PTHR12176">
    <property type="entry name" value="SAM-DEPENDENT METHYLTRANSFERASE SUPERFAMILY PROTEIN"/>
    <property type="match status" value="1"/>
</dbReference>
<dbReference type="Pfam" id="PF13847">
    <property type="entry name" value="Methyltransf_31"/>
    <property type="match status" value="1"/>
</dbReference>
<dbReference type="Pfam" id="PF01564">
    <property type="entry name" value="Spermine_synth"/>
    <property type="match status" value="1"/>
</dbReference>
<dbReference type="SUPFAM" id="SSF53335">
    <property type="entry name" value="S-adenosyl-L-methionine-dependent methyltransferases"/>
    <property type="match status" value="2"/>
</dbReference>
<proteinExistence type="inferred from homology"/>
<reference key="1">
    <citation type="journal article" date="2005" name="Genome Res.">
        <title>Comparative genome sequencing of Drosophila pseudoobscura: chromosomal, gene, and cis-element evolution.</title>
        <authorList>
            <person name="Richards S."/>
            <person name="Liu Y."/>
            <person name="Bettencourt B.R."/>
            <person name="Hradecky P."/>
            <person name="Letovsky S."/>
            <person name="Nielsen R."/>
            <person name="Thornton K."/>
            <person name="Hubisz M.J."/>
            <person name="Chen R."/>
            <person name="Meisel R.P."/>
            <person name="Couronne O."/>
            <person name="Hua S."/>
            <person name="Smith M.A."/>
            <person name="Zhang P."/>
            <person name="Liu J."/>
            <person name="Bussemaker H.J."/>
            <person name="van Batenburg M.F."/>
            <person name="Howells S.L."/>
            <person name="Scherer S.E."/>
            <person name="Sodergren E."/>
            <person name="Matthews B.B."/>
            <person name="Crosby M.A."/>
            <person name="Schroeder A.J."/>
            <person name="Ortiz-Barrientos D."/>
            <person name="Rives C.M."/>
            <person name="Metzker M.L."/>
            <person name="Muzny D.M."/>
            <person name="Scott G."/>
            <person name="Steffen D."/>
            <person name="Wheeler D.A."/>
            <person name="Worley K.C."/>
            <person name="Havlak P."/>
            <person name="Durbin K.J."/>
            <person name="Egan A."/>
            <person name="Gill R."/>
            <person name="Hume J."/>
            <person name="Morgan M.B."/>
            <person name="Miner G."/>
            <person name="Hamilton C."/>
            <person name="Huang Y."/>
            <person name="Waldron L."/>
            <person name="Verduzco D."/>
            <person name="Clerc-Blankenburg K.P."/>
            <person name="Dubchak I."/>
            <person name="Noor M.A.F."/>
            <person name="Anderson W."/>
            <person name="White K.P."/>
            <person name="Clark A.G."/>
            <person name="Schaeffer S.W."/>
            <person name="Gelbart W.M."/>
            <person name="Weinstock G.M."/>
            <person name="Gibbs R.A."/>
        </authorList>
    </citation>
    <scope>NUCLEOTIDE SEQUENCE [LARGE SCALE GENOMIC DNA]</scope>
    <source>
        <strain>MV2-25 / Tucson 14011-0121.94</strain>
    </source>
</reference>
<sequence length="673" mass="76198">MNLLPKTREEFAQTDYWNEFFKKRGEKAFEWYGEYLDLCDHIHKYIKPVDKILMLGCGNSKLSMDMYDSEYRDITNIDISPVAVKKMLEQNARTRPDMKFLQMDATAMTFPDESFSVALDKGTLDALFVDDAPETKAVVENYFKEILRTMRNGGRYFCVSLLQEHILNFLVEFLPRHNCMLRIVHCLGVEQANKEKNADDAMKMPVFVVIATKFKSLPMPILEFGLGNDKMQRFTESSELSNAVRSVQKAALVFNGLARSSIAGHDEVTLDLYRPSENTPRYSIYILDQAAARGLNKYAAFIVPQGREIEWLFGTPSGRKKLQASAKFQRLAVVTLHRDQVYNTLEEVQAELGDTVFSLAPHGHIKQIPYLSLGSDVGKRETLISGFSKISGEFRIEEVEAGGKTLRRLIFLSNQFVVQSEALVKTIKIKGKKERKKIDFGYLACQHHLYMSVGVQLATTLQNPKKDVQKDVLVIGLGGGGLCSFLHAALPQSRITAVEIDPIMLEVAEQYFELKQDKRFHVVIDDGLAFVERCRNEDIHFDAVLFDVDSKDLSLGMSCPPQGFLAHDVLLHIKEIIGPKGLFMLNLVCRDETLKTEAIANLQKVFPAVCSYKLEEDINEVVYCANDEKYKTVEHWQKAMGTAGRGLNTTIKEHKLASEDPLEVAEFLSELKL</sequence>